<accession>Q46K33</accession>
<feature type="chain" id="PRO_0000242929" description="tRNA uridine(34) hydroxylase">
    <location>
        <begin position="1"/>
        <end position="319"/>
    </location>
</feature>
<feature type="domain" description="Rhodanese" evidence="1">
    <location>
        <begin position="133"/>
        <end position="231"/>
    </location>
</feature>
<feature type="active site" description="Cysteine persulfide intermediate" evidence="1">
    <location>
        <position position="191"/>
    </location>
</feature>
<dbReference type="EC" id="1.14.-.-" evidence="1"/>
<dbReference type="EMBL" id="CP000095">
    <property type="protein sequence ID" value="AAZ58145.1"/>
    <property type="molecule type" value="Genomic_DNA"/>
</dbReference>
<dbReference type="RefSeq" id="WP_011294743.1">
    <property type="nucleotide sequence ID" value="NC_007335.2"/>
</dbReference>
<dbReference type="SMR" id="Q46K33"/>
<dbReference type="STRING" id="59920.PMN2A_0654"/>
<dbReference type="KEGG" id="pmn:PMN2A_0654"/>
<dbReference type="HOGENOM" id="CLU_038878_0_0_3"/>
<dbReference type="OrthoDB" id="9778326at2"/>
<dbReference type="PhylomeDB" id="Q46K33"/>
<dbReference type="Proteomes" id="UP000002535">
    <property type="component" value="Chromosome"/>
</dbReference>
<dbReference type="GO" id="GO:0016705">
    <property type="term" value="F:oxidoreductase activity, acting on paired donors, with incorporation or reduction of molecular oxygen"/>
    <property type="evidence" value="ECO:0007669"/>
    <property type="project" value="UniProtKB-UniRule"/>
</dbReference>
<dbReference type="GO" id="GO:0006400">
    <property type="term" value="P:tRNA modification"/>
    <property type="evidence" value="ECO:0007669"/>
    <property type="project" value="UniProtKB-UniRule"/>
</dbReference>
<dbReference type="CDD" id="cd01518">
    <property type="entry name" value="RHOD_YceA"/>
    <property type="match status" value="1"/>
</dbReference>
<dbReference type="Gene3D" id="3.30.70.100">
    <property type="match status" value="1"/>
</dbReference>
<dbReference type="Gene3D" id="3.40.250.10">
    <property type="entry name" value="Rhodanese-like domain"/>
    <property type="match status" value="1"/>
</dbReference>
<dbReference type="HAMAP" id="MF_00469">
    <property type="entry name" value="TrhO"/>
    <property type="match status" value="1"/>
</dbReference>
<dbReference type="InterPro" id="IPR001763">
    <property type="entry name" value="Rhodanese-like_dom"/>
</dbReference>
<dbReference type="InterPro" id="IPR036873">
    <property type="entry name" value="Rhodanese-like_dom_sf"/>
</dbReference>
<dbReference type="InterPro" id="IPR020936">
    <property type="entry name" value="TrhO"/>
</dbReference>
<dbReference type="InterPro" id="IPR040503">
    <property type="entry name" value="TRHO_N"/>
</dbReference>
<dbReference type="NCBIfam" id="NF001136">
    <property type="entry name" value="PRK00142.1-4"/>
    <property type="match status" value="1"/>
</dbReference>
<dbReference type="PANTHER" id="PTHR43268:SF3">
    <property type="entry name" value="RHODANESE-LIKE DOMAIN-CONTAINING PROTEIN 7-RELATED"/>
    <property type="match status" value="1"/>
</dbReference>
<dbReference type="PANTHER" id="PTHR43268">
    <property type="entry name" value="THIOSULFATE SULFURTRANSFERASE/RHODANESE-LIKE DOMAIN-CONTAINING PROTEIN 2"/>
    <property type="match status" value="1"/>
</dbReference>
<dbReference type="Pfam" id="PF00581">
    <property type="entry name" value="Rhodanese"/>
    <property type="match status" value="1"/>
</dbReference>
<dbReference type="Pfam" id="PF17773">
    <property type="entry name" value="UPF0176_N"/>
    <property type="match status" value="1"/>
</dbReference>
<dbReference type="SMART" id="SM00450">
    <property type="entry name" value="RHOD"/>
    <property type="match status" value="1"/>
</dbReference>
<dbReference type="SUPFAM" id="SSF52821">
    <property type="entry name" value="Rhodanese/Cell cycle control phosphatase"/>
    <property type="match status" value="1"/>
</dbReference>
<dbReference type="PROSITE" id="PS50206">
    <property type="entry name" value="RHODANESE_3"/>
    <property type="match status" value="1"/>
</dbReference>
<reference key="1">
    <citation type="journal article" date="2007" name="PLoS Genet.">
        <title>Patterns and implications of gene gain and loss in the evolution of Prochlorococcus.</title>
        <authorList>
            <person name="Kettler G.C."/>
            <person name="Martiny A.C."/>
            <person name="Huang K."/>
            <person name="Zucker J."/>
            <person name="Coleman M.L."/>
            <person name="Rodrigue S."/>
            <person name="Chen F."/>
            <person name="Lapidus A."/>
            <person name="Ferriera S."/>
            <person name="Johnson J."/>
            <person name="Steglich C."/>
            <person name="Church G.M."/>
            <person name="Richardson P."/>
            <person name="Chisholm S.W."/>
        </authorList>
    </citation>
    <scope>NUCLEOTIDE SEQUENCE [LARGE SCALE GENOMIC DNA]</scope>
    <source>
        <strain>NATL2A</strain>
    </source>
</reference>
<keyword id="KW-0560">Oxidoreductase</keyword>
<keyword id="KW-1185">Reference proteome</keyword>
<keyword id="KW-0819">tRNA processing</keyword>
<organism>
    <name type="scientific">Prochlorococcus marinus (strain NATL2A)</name>
    <dbReference type="NCBI Taxonomy" id="59920"/>
    <lineage>
        <taxon>Bacteria</taxon>
        <taxon>Bacillati</taxon>
        <taxon>Cyanobacteriota</taxon>
        <taxon>Cyanophyceae</taxon>
        <taxon>Synechococcales</taxon>
        <taxon>Prochlorococcaceae</taxon>
        <taxon>Prochlorococcus</taxon>
    </lineage>
</organism>
<sequence length="319" mass="36459">MKKDDRLKKFKYKVAAFYNFISIIDEEILLIKEELTKLATNQKIKGTILLASEGVNGTICGPENAIVQFIETLEKLLKVSDINVKYSWSEKQAFRRFKARKKKEIVTIGLKEINPTKSVGKYIKAGEWNQFLEDPNSVVIDTRNEYEIKIGNFAGALNPQTSSFREFPAWVQKHLKPLIEENPSLKIGMYCTGGIRCEKATSYLIEEGFSDVHHLEGGILKYLEDVSSENSLWNGECFVFDQRVSLDHELLPGSHRMCHACGLPISPEDLKKPTYIKGLQCDACVNKFTDSDRARFAERQRQIDEIMKRLPENSIWPSS</sequence>
<protein>
    <recommendedName>
        <fullName evidence="1">tRNA uridine(34) hydroxylase</fullName>
        <ecNumber evidence="1">1.14.-.-</ecNumber>
    </recommendedName>
    <alternativeName>
        <fullName evidence="1">tRNA hydroxylation protein O</fullName>
    </alternativeName>
</protein>
<proteinExistence type="inferred from homology"/>
<gene>
    <name evidence="1" type="primary">trhO</name>
    <name type="ordered locus">PMN2A_0654</name>
</gene>
<name>TRHO_PROMT</name>
<comment type="function">
    <text evidence="1">Catalyzes oxygen-dependent 5-hydroxyuridine (ho5U) modification at position 34 in tRNAs.</text>
</comment>
<comment type="catalytic activity">
    <reaction evidence="1">
        <text>uridine(34) in tRNA + AH2 + O2 = 5-hydroxyuridine(34) in tRNA + A + H2O</text>
        <dbReference type="Rhea" id="RHEA:64224"/>
        <dbReference type="Rhea" id="RHEA-COMP:11727"/>
        <dbReference type="Rhea" id="RHEA-COMP:13381"/>
        <dbReference type="ChEBI" id="CHEBI:13193"/>
        <dbReference type="ChEBI" id="CHEBI:15377"/>
        <dbReference type="ChEBI" id="CHEBI:15379"/>
        <dbReference type="ChEBI" id="CHEBI:17499"/>
        <dbReference type="ChEBI" id="CHEBI:65315"/>
        <dbReference type="ChEBI" id="CHEBI:136877"/>
    </reaction>
</comment>
<comment type="similarity">
    <text evidence="1">Belongs to the TrhO family.</text>
</comment>
<evidence type="ECO:0000255" key="1">
    <source>
        <dbReference type="HAMAP-Rule" id="MF_00469"/>
    </source>
</evidence>